<reference key="1">
    <citation type="submission" date="2009-06" db="EMBL/GenBank/DDBJ databases">
        <title>Complete sequence of Desulfovibrio salexigens DSM 2638.</title>
        <authorList>
            <consortium name="US DOE Joint Genome Institute"/>
            <person name="Lucas S."/>
            <person name="Copeland A."/>
            <person name="Lapidus A."/>
            <person name="Glavina del Rio T."/>
            <person name="Tice H."/>
            <person name="Bruce D."/>
            <person name="Goodwin L."/>
            <person name="Pitluck S."/>
            <person name="Munk A.C."/>
            <person name="Brettin T."/>
            <person name="Detter J.C."/>
            <person name="Han C."/>
            <person name="Tapia R."/>
            <person name="Larimer F."/>
            <person name="Land M."/>
            <person name="Hauser L."/>
            <person name="Kyrpides N."/>
            <person name="Anderson I."/>
            <person name="Wall J.D."/>
            <person name="Arkin A.P."/>
            <person name="Dehal P."/>
            <person name="Chivian D."/>
            <person name="Giles B."/>
            <person name="Hazen T.C."/>
        </authorList>
    </citation>
    <scope>NUCLEOTIDE SEQUENCE [LARGE SCALE GENOMIC DNA]</scope>
    <source>
        <strain>ATCC 14822 / DSM 2638 / NCIMB 8403 / VKM B-1763</strain>
    </source>
</reference>
<keyword id="KW-1185">Reference proteome</keyword>
<keyword id="KW-0687">Ribonucleoprotein</keyword>
<keyword id="KW-0689">Ribosomal protein</keyword>
<keyword id="KW-0694">RNA-binding</keyword>
<keyword id="KW-0699">rRNA-binding</keyword>
<gene>
    <name evidence="1" type="primary">rpsR</name>
    <name type="ordered locus">Desal_2024</name>
</gene>
<name>RS18_MARSD</name>
<proteinExistence type="inferred from homology"/>
<evidence type="ECO:0000255" key="1">
    <source>
        <dbReference type="HAMAP-Rule" id="MF_00270"/>
    </source>
</evidence>
<evidence type="ECO:0000305" key="2"/>
<protein>
    <recommendedName>
        <fullName evidence="1">Small ribosomal subunit protein bS18</fullName>
    </recommendedName>
    <alternativeName>
        <fullName evidence="2">30S ribosomal protein S18</fullName>
    </alternativeName>
</protein>
<sequence>MAFKRKFTPKRKFCRFCADKNLPLDYKRPDILKDFVTERGKIIARRITGTCAKHQRRLTTEIKRSRQMALMHYTTVHSTDVKKKSI</sequence>
<accession>C6BVA9</accession>
<feature type="chain" id="PRO_1000204724" description="Small ribosomal subunit protein bS18">
    <location>
        <begin position="1"/>
        <end position="86"/>
    </location>
</feature>
<dbReference type="EMBL" id="CP001649">
    <property type="protein sequence ID" value="ACS80084.1"/>
    <property type="molecule type" value="Genomic_DNA"/>
</dbReference>
<dbReference type="RefSeq" id="WP_015851900.1">
    <property type="nucleotide sequence ID" value="NC_012881.1"/>
</dbReference>
<dbReference type="SMR" id="C6BVA9"/>
<dbReference type="STRING" id="526222.Desal_2024"/>
<dbReference type="KEGG" id="dsa:Desal_2024"/>
<dbReference type="eggNOG" id="COG0238">
    <property type="taxonomic scope" value="Bacteria"/>
</dbReference>
<dbReference type="HOGENOM" id="CLU_148710_2_2_7"/>
<dbReference type="OrthoDB" id="9812008at2"/>
<dbReference type="Proteomes" id="UP000002601">
    <property type="component" value="Chromosome"/>
</dbReference>
<dbReference type="GO" id="GO:0022627">
    <property type="term" value="C:cytosolic small ribosomal subunit"/>
    <property type="evidence" value="ECO:0007669"/>
    <property type="project" value="TreeGrafter"/>
</dbReference>
<dbReference type="GO" id="GO:0070181">
    <property type="term" value="F:small ribosomal subunit rRNA binding"/>
    <property type="evidence" value="ECO:0007669"/>
    <property type="project" value="TreeGrafter"/>
</dbReference>
<dbReference type="GO" id="GO:0003735">
    <property type="term" value="F:structural constituent of ribosome"/>
    <property type="evidence" value="ECO:0007669"/>
    <property type="project" value="InterPro"/>
</dbReference>
<dbReference type="GO" id="GO:0006412">
    <property type="term" value="P:translation"/>
    <property type="evidence" value="ECO:0007669"/>
    <property type="project" value="UniProtKB-UniRule"/>
</dbReference>
<dbReference type="Gene3D" id="4.10.640.10">
    <property type="entry name" value="Ribosomal protein S18"/>
    <property type="match status" value="1"/>
</dbReference>
<dbReference type="HAMAP" id="MF_00270">
    <property type="entry name" value="Ribosomal_bS18"/>
    <property type="match status" value="1"/>
</dbReference>
<dbReference type="InterPro" id="IPR001648">
    <property type="entry name" value="Ribosomal_bS18"/>
</dbReference>
<dbReference type="InterPro" id="IPR018275">
    <property type="entry name" value="Ribosomal_bS18_CS"/>
</dbReference>
<dbReference type="InterPro" id="IPR036870">
    <property type="entry name" value="Ribosomal_bS18_sf"/>
</dbReference>
<dbReference type="NCBIfam" id="TIGR00165">
    <property type="entry name" value="S18"/>
    <property type="match status" value="1"/>
</dbReference>
<dbReference type="PANTHER" id="PTHR13479">
    <property type="entry name" value="30S RIBOSOMAL PROTEIN S18"/>
    <property type="match status" value="1"/>
</dbReference>
<dbReference type="PANTHER" id="PTHR13479:SF40">
    <property type="entry name" value="SMALL RIBOSOMAL SUBUNIT PROTEIN BS18M"/>
    <property type="match status" value="1"/>
</dbReference>
<dbReference type="Pfam" id="PF01084">
    <property type="entry name" value="Ribosomal_S18"/>
    <property type="match status" value="1"/>
</dbReference>
<dbReference type="PRINTS" id="PR00974">
    <property type="entry name" value="RIBOSOMALS18"/>
</dbReference>
<dbReference type="SUPFAM" id="SSF46911">
    <property type="entry name" value="Ribosomal protein S18"/>
    <property type="match status" value="1"/>
</dbReference>
<dbReference type="PROSITE" id="PS00057">
    <property type="entry name" value="RIBOSOMAL_S18"/>
    <property type="match status" value="1"/>
</dbReference>
<organism>
    <name type="scientific">Maridesulfovibrio salexigens (strain ATCC 14822 / DSM 2638 / NCIMB 8403 / VKM B-1763)</name>
    <name type="common">Desulfovibrio salexigens</name>
    <dbReference type="NCBI Taxonomy" id="526222"/>
    <lineage>
        <taxon>Bacteria</taxon>
        <taxon>Pseudomonadati</taxon>
        <taxon>Thermodesulfobacteriota</taxon>
        <taxon>Desulfovibrionia</taxon>
        <taxon>Desulfovibrionales</taxon>
        <taxon>Desulfovibrionaceae</taxon>
        <taxon>Maridesulfovibrio</taxon>
    </lineage>
</organism>
<comment type="function">
    <text evidence="1">Binds as a heterodimer with protein bS6 to the central domain of the 16S rRNA, where it helps stabilize the platform of the 30S subunit.</text>
</comment>
<comment type="subunit">
    <text evidence="1">Part of the 30S ribosomal subunit. Forms a tight heterodimer with protein bS6.</text>
</comment>
<comment type="similarity">
    <text evidence="1">Belongs to the bacterial ribosomal protein bS18 family.</text>
</comment>